<keyword id="KW-0460">Magnesium</keyword>
<keyword id="KW-0560">Oxidoreductase</keyword>
<keyword id="KW-0670">Pyruvate</keyword>
<keyword id="KW-1185">Reference proteome</keyword>
<keyword id="KW-0786">Thiamine pyrophosphate</keyword>
<dbReference type="EC" id="1.2.4.1"/>
<dbReference type="EMBL" id="BA000036">
    <property type="protein sequence ID" value="BAB99641.1"/>
    <property type="molecule type" value="Genomic_DNA"/>
</dbReference>
<dbReference type="EMBL" id="BX927154">
    <property type="protein sequence ID" value="CAF20589.1"/>
    <property type="molecule type" value="Genomic_DNA"/>
</dbReference>
<dbReference type="RefSeq" id="NP_601447.1">
    <property type="nucleotide sequence ID" value="NC_003450.3"/>
</dbReference>
<dbReference type="RefSeq" id="WP_011014985.1">
    <property type="nucleotide sequence ID" value="NC_006958.1"/>
</dbReference>
<dbReference type="SMR" id="Q8NNF6"/>
<dbReference type="STRING" id="196627.cg2466"/>
<dbReference type="GeneID" id="1020200"/>
<dbReference type="KEGG" id="cgb:cg2466"/>
<dbReference type="KEGG" id="cgl:Cgl2248"/>
<dbReference type="PATRIC" id="fig|196627.13.peg.2180"/>
<dbReference type="eggNOG" id="COG2609">
    <property type="taxonomic scope" value="Bacteria"/>
</dbReference>
<dbReference type="HOGENOM" id="CLU_009154_2_0_11"/>
<dbReference type="OrthoDB" id="9759664at2"/>
<dbReference type="BioCyc" id="CORYNE:G18NG-11842-MONOMER"/>
<dbReference type="BRENDA" id="1.2.1.104">
    <property type="organism ID" value="960"/>
</dbReference>
<dbReference type="BRENDA" id="1.2.4.1">
    <property type="organism ID" value="960"/>
</dbReference>
<dbReference type="SABIO-RK" id="Q8NNF6"/>
<dbReference type="Proteomes" id="UP000000582">
    <property type="component" value="Chromosome"/>
</dbReference>
<dbReference type="Proteomes" id="UP000001009">
    <property type="component" value="Chromosome"/>
</dbReference>
<dbReference type="GO" id="GO:0000287">
    <property type="term" value="F:magnesium ion binding"/>
    <property type="evidence" value="ECO:0007669"/>
    <property type="project" value="UniProtKB-ARBA"/>
</dbReference>
<dbReference type="GO" id="GO:0004739">
    <property type="term" value="F:pyruvate dehydrogenase (acetyl-transferring) activity"/>
    <property type="evidence" value="ECO:0007669"/>
    <property type="project" value="UniProtKB-EC"/>
</dbReference>
<dbReference type="CDD" id="cd02017">
    <property type="entry name" value="TPP_E1_EcPDC_like"/>
    <property type="match status" value="1"/>
</dbReference>
<dbReference type="FunFam" id="3.40.50.970:FF:000011">
    <property type="entry name" value="Pyruvate dehydrogenase E1 component"/>
    <property type="match status" value="1"/>
</dbReference>
<dbReference type="Gene3D" id="3.40.50.920">
    <property type="match status" value="1"/>
</dbReference>
<dbReference type="Gene3D" id="3.40.50.970">
    <property type="match status" value="2"/>
</dbReference>
<dbReference type="InterPro" id="IPR035807">
    <property type="entry name" value="PDC_E1_N"/>
</dbReference>
<dbReference type="InterPro" id="IPR051157">
    <property type="entry name" value="PDH/Transketolase"/>
</dbReference>
<dbReference type="InterPro" id="IPR004660">
    <property type="entry name" value="PDH_E1"/>
</dbReference>
<dbReference type="InterPro" id="IPR041621">
    <property type="entry name" value="PDH_E1_M"/>
</dbReference>
<dbReference type="InterPro" id="IPR029061">
    <property type="entry name" value="THDP-binding"/>
</dbReference>
<dbReference type="InterPro" id="IPR009014">
    <property type="entry name" value="Transketo_C/PFOR_II"/>
</dbReference>
<dbReference type="InterPro" id="IPR055152">
    <property type="entry name" value="Transketolase-like_C_2"/>
</dbReference>
<dbReference type="InterPro" id="IPR005474">
    <property type="entry name" value="Transketolase_N"/>
</dbReference>
<dbReference type="NCBIfam" id="TIGR00759">
    <property type="entry name" value="aceE"/>
    <property type="match status" value="1"/>
</dbReference>
<dbReference type="PANTHER" id="PTHR43825">
    <property type="entry name" value="PYRUVATE DEHYDROGENASE E1 COMPONENT"/>
    <property type="match status" value="1"/>
</dbReference>
<dbReference type="PANTHER" id="PTHR43825:SF3">
    <property type="entry name" value="PYRUVATE DEHYDROGENASE E1 COMPONENT"/>
    <property type="match status" value="1"/>
</dbReference>
<dbReference type="Pfam" id="PF17831">
    <property type="entry name" value="PDH_E1_M"/>
    <property type="match status" value="1"/>
</dbReference>
<dbReference type="Pfam" id="PF22613">
    <property type="entry name" value="Transketolase_C_1"/>
    <property type="match status" value="1"/>
</dbReference>
<dbReference type="Pfam" id="PF00456">
    <property type="entry name" value="Transketolase_N"/>
    <property type="match status" value="1"/>
</dbReference>
<dbReference type="PIRSF" id="PIRSF000156">
    <property type="entry name" value="Pyruvate_dh_E1"/>
    <property type="match status" value="1"/>
</dbReference>
<dbReference type="SUPFAM" id="SSF52518">
    <property type="entry name" value="Thiamin diphosphate-binding fold (THDP-binding)"/>
    <property type="match status" value="2"/>
</dbReference>
<dbReference type="SUPFAM" id="SSF52922">
    <property type="entry name" value="TK C-terminal domain-like"/>
    <property type="match status" value="1"/>
</dbReference>
<organism>
    <name type="scientific">Corynebacterium glutamicum (strain ATCC 13032 / DSM 20300 / JCM 1318 / BCRC 11384 / CCUG 27702 / LMG 3730 / NBRC 12168 / NCIMB 10025 / NRRL B-2784 / 534)</name>
    <dbReference type="NCBI Taxonomy" id="196627"/>
    <lineage>
        <taxon>Bacteria</taxon>
        <taxon>Bacillati</taxon>
        <taxon>Actinomycetota</taxon>
        <taxon>Actinomycetes</taxon>
        <taxon>Mycobacteriales</taxon>
        <taxon>Corynebacteriaceae</taxon>
        <taxon>Corynebacterium</taxon>
    </lineage>
</organism>
<protein>
    <recommendedName>
        <fullName>Pyruvate dehydrogenase E1 component</fullName>
        <shortName>E1p</shortName>
        <shortName>PDH E1 component</shortName>
        <ecNumber>1.2.4.1</ecNumber>
    </recommendedName>
</protein>
<reference key="1">
    <citation type="journal article" date="2003" name="Appl. Microbiol. Biotechnol.">
        <title>The Corynebacterium glutamicum genome: features and impacts on biotechnological processes.</title>
        <authorList>
            <person name="Ikeda M."/>
            <person name="Nakagawa S."/>
        </authorList>
    </citation>
    <scope>NUCLEOTIDE SEQUENCE [LARGE SCALE GENOMIC DNA]</scope>
    <source>
        <strain>ATCC 13032 / DSM 20300 / JCM 1318 / BCRC 11384 / CCUG 27702 / LMG 3730 / NBRC 12168 / NCIMB 10025 / NRRL B-2784 / 534</strain>
    </source>
</reference>
<reference key="2">
    <citation type="journal article" date="2003" name="J. Biotechnol.">
        <title>The complete Corynebacterium glutamicum ATCC 13032 genome sequence and its impact on the production of L-aspartate-derived amino acids and vitamins.</title>
        <authorList>
            <person name="Kalinowski J."/>
            <person name="Bathe B."/>
            <person name="Bartels D."/>
            <person name="Bischoff N."/>
            <person name="Bott M."/>
            <person name="Burkovski A."/>
            <person name="Dusch N."/>
            <person name="Eggeling L."/>
            <person name="Eikmanns B.J."/>
            <person name="Gaigalat L."/>
            <person name="Goesmann A."/>
            <person name="Hartmann M."/>
            <person name="Huthmacher K."/>
            <person name="Kraemer R."/>
            <person name="Linke B."/>
            <person name="McHardy A.C."/>
            <person name="Meyer F."/>
            <person name="Moeckel B."/>
            <person name="Pfefferle W."/>
            <person name="Puehler A."/>
            <person name="Rey D.A."/>
            <person name="Rueckert C."/>
            <person name="Rupp O."/>
            <person name="Sahm H."/>
            <person name="Wendisch V.F."/>
            <person name="Wiegraebe I."/>
            <person name="Tauch A."/>
        </authorList>
    </citation>
    <scope>NUCLEOTIDE SEQUENCE [LARGE SCALE GENOMIC DNA]</scope>
    <source>
        <strain>ATCC 13032 / DSM 20300 / JCM 1318 / BCRC 11384 / CCUG 27702 / LMG 3730 / NBRC 12168 / NCIMB 10025 / NRRL B-2784 / 534</strain>
    </source>
</reference>
<reference key="3">
    <citation type="journal article" date="2006" name="J. Biol. Chem.">
        <title>Corynebacterial protein kinase G controls 2-oxoglutarate dehydrogenase activity via the phosphorylation status of the OdhI protein.</title>
        <authorList>
            <person name="Niebisch A."/>
            <person name="Kabus A."/>
            <person name="Schultz C."/>
            <person name="Weil B."/>
            <person name="Bott M."/>
        </authorList>
    </citation>
    <scope>IDENTIFICATION IN THE ODH/PDH COMPLEX</scope>
    <source>
        <strain>ATCC 13032 / DSM 20300 / JCM 1318 / BCRC 11384 / CCUG 27702 / LMG 3730 / NBRC 12168 / NCIMB 10025 / NRRL B-2784 / 534</strain>
    </source>
</reference>
<reference key="4">
    <citation type="journal article" date="2010" name="J. Bacteriol.">
        <title>The E2 domain of OdhA of Corynebacterium glutamicum has succinyltransferase activity dependent on lipoyl residues of the acetyltransferase AceF.</title>
        <authorList>
            <person name="Hoffelder M."/>
            <person name="Raasch K."/>
            <person name="van Ooyen J."/>
            <person name="Eggeling L."/>
        </authorList>
    </citation>
    <scope>FUNCTION</scope>
    <scope>CATALYTIC ACTIVITY</scope>
    <scope>KINETIC PARAMETERS</scope>
    <scope>DISRUPTION PHENOTYPE</scope>
    <source>
        <strain>ATCC 13032 / DSM 20300 / JCM 1318 / BCRC 11384 / CCUG 27702 / LMG 3730 / NBRC 12168 / NCIMB 10025 / NRRL B-2784 / 534</strain>
    </source>
</reference>
<comment type="function">
    <text evidence="3">Is a specific component of the pyruvate dehydrogenase (PDH) complex, that catalyzes the overall conversion of pyruvate to acetyl-CoA and CO(2). AceE has reductase activity with pyruvate but does not react with 2-oxoglutarate.</text>
</comment>
<comment type="catalytic activity">
    <reaction evidence="3">
        <text>N(6)-[(R)-lipoyl]-L-lysyl-[protein] + pyruvate + H(+) = N(6)-[(R)-S(8)-acetyldihydrolipoyl]-L-lysyl-[protein] + CO2</text>
        <dbReference type="Rhea" id="RHEA:19189"/>
        <dbReference type="Rhea" id="RHEA-COMP:10474"/>
        <dbReference type="Rhea" id="RHEA-COMP:10478"/>
        <dbReference type="ChEBI" id="CHEBI:15361"/>
        <dbReference type="ChEBI" id="CHEBI:15378"/>
        <dbReference type="ChEBI" id="CHEBI:16526"/>
        <dbReference type="ChEBI" id="CHEBI:83099"/>
        <dbReference type="ChEBI" id="CHEBI:83111"/>
        <dbReference type="EC" id="1.2.4.1"/>
    </reaction>
</comment>
<comment type="cofactor">
    <cofactor evidence="1">
        <name>Mg(2+)</name>
        <dbReference type="ChEBI" id="CHEBI:18420"/>
    </cofactor>
</comment>
<comment type="cofactor">
    <cofactor evidence="1">
        <name>thiamine diphosphate</name>
        <dbReference type="ChEBI" id="CHEBI:58937"/>
    </cofactor>
</comment>
<comment type="biophysicochemical properties">
    <kinetics>
        <KM evidence="3">0.066 mM for pyruvate</KM>
    </kinetics>
</comment>
<comment type="subunit">
    <text evidence="1 2">Homodimer (By similarity). Part of an unusual ODH/PDH supercomplex, consisting of AceE (E1), AceF (E2), and Lpd (E3) together with OdhA (E1+E2).</text>
</comment>
<comment type="disruption phenotype">
    <text evidence="3">Cells lacking this gene display no PDH activity.</text>
</comment>
<sequence>MADQAKLGGKPSDDSNFAMIRDGVASYLNDSDPEETNEWMDSLDGLLQESSPERARYLMLRLLERASAKRVSLPPMTSTDYVNTIPTSMEPEFPGDEEMEKRYRRWIRWNAAIMVHRAQRPGIGVGGHISTYAGAAPLYEVGFNHFFRGKDHPGGGDQIFFQGHASPGMYARAFMEGRLSEDDLDGFRQEVSREQGGIPSYPHPHGMKDFWEFPTVSMGLGPMDAIYQARFNRYLENRGIKDTSDQHVWAFLGDGEMDEPESRGLIQQAALNNLDNLTFVVNCNLQRLDGPVRGNTKIIQELESFFRGAGWSVIKVVWGREWDELLEKDQDGALVEIMNNTSDGDYQTFKANDGAYVREHFFGRDPRTAKLVENMTDEEIWKLPRGGHDYRKVYAAYKRALETKDRPTVILAHTIKGYGLGHNFEGRNATHQMKKLTLDDLKLFRDKQGIPITDEQLEKDPYLPPYYHPGEDAPEIKYMKERRAALGGYLPERRENYDPIQVPPLDKLRSVRKGSGKQQIATTMATVRTFKELMRDKGLADRLVPIIPDEARTFGLDSWFPTLKIYNPHGQNYVPVDHDLMLSYREAPEGQILHEGINEAGSVASFIAAGTSYATHGKAMIPLYIFYSMFGFQRTGDSIWAAADQMARGFLLGATAGRTTLTGEGLQHMDGHSPVLASTNEGVETYDPSFAYEIAHLVHRGIDRMYGPGKGEDVIYYITIYNEPTPQPAEPEGLDVEGLHKGIYLYSRGEGTGHEANILASGVGMQWALKAASILEADYGVRANIYSATSWVNLARDGAARNKAQLRNPGADAGEAFVTTQLKQTSGPYVAVSDFSTDLPNQIREWVPGDYTVLGADGFGFSDTRPAARRFFNIDAESIVVAVLNSLAREGKIDVSVAAQAAEKFKLDDPTSVSVDPNAPEE</sequence>
<feature type="chain" id="PRO_0000420522" description="Pyruvate dehydrogenase E1 component">
    <location>
        <begin position="1"/>
        <end position="922"/>
    </location>
</feature>
<accession>Q8NNF6</accession>
<accession>Q6M3J1</accession>
<proteinExistence type="evidence at protein level"/>
<name>ODP1_CORGL</name>
<gene>
    <name type="primary">aceE</name>
    <name type="ordered locus">Cgl2248</name>
    <name type="ordered locus">cg2466</name>
</gene>
<evidence type="ECO:0000250" key="1"/>
<evidence type="ECO:0000269" key="2">
    <source>
    </source>
</evidence>
<evidence type="ECO:0000269" key="3">
    <source>
    </source>
</evidence>